<gene>
    <name type="ordered locus">YPL034W</name>
</gene>
<name>YP034_YEAST</name>
<organism>
    <name type="scientific">Saccharomyces cerevisiae (strain ATCC 204508 / S288c)</name>
    <name type="common">Baker's yeast</name>
    <dbReference type="NCBI Taxonomy" id="559292"/>
    <lineage>
        <taxon>Eukaryota</taxon>
        <taxon>Fungi</taxon>
        <taxon>Dikarya</taxon>
        <taxon>Ascomycota</taxon>
        <taxon>Saccharomycotina</taxon>
        <taxon>Saccharomycetes</taxon>
        <taxon>Saccharomycetales</taxon>
        <taxon>Saccharomycetaceae</taxon>
        <taxon>Saccharomyces</taxon>
    </lineage>
</organism>
<keyword id="KW-1185">Reference proteome</keyword>
<sequence>MTTRKTVDSRLLEWQTTCKHPVINLTPEKVDKLYHLKLKSESKNISSNRLLPISLSSLQKKMEKLFIKDKSHSHKPSLPDPKVPTLRTYKDGGFFISGKGSMKLPDIESAIHKFLWKKYGKGLVYCYGCDPTGKKRHTEWFNVPVLELPSVLRLIDSYCLGGESR</sequence>
<protein>
    <recommendedName>
        <fullName>Uncharacterized protein YPL034W</fullName>
    </recommendedName>
</protein>
<proteinExistence type="predicted"/>
<accession>Q03083</accession>
<accession>D6W3X9</accession>
<feature type="chain" id="PRO_0000240704" description="Uncharacterized protein YPL034W">
    <location>
        <begin position="1"/>
        <end position="165"/>
    </location>
</feature>
<dbReference type="EMBL" id="U44030">
    <property type="protein sequence ID" value="AAB68185.1"/>
    <property type="molecule type" value="Genomic_DNA"/>
</dbReference>
<dbReference type="EMBL" id="AY692647">
    <property type="protein sequence ID" value="AAT92666.1"/>
    <property type="molecule type" value="Genomic_DNA"/>
</dbReference>
<dbReference type="EMBL" id="BK006949">
    <property type="protein sequence ID" value="DAA11395.1"/>
    <property type="molecule type" value="Genomic_DNA"/>
</dbReference>
<dbReference type="PIR" id="S62040">
    <property type="entry name" value="S62040"/>
</dbReference>
<dbReference type="RefSeq" id="NP_015291.1">
    <property type="nucleotide sequence ID" value="NM_001183848.1"/>
</dbReference>
<dbReference type="BioGRID" id="36144">
    <property type="interactions" value="101"/>
</dbReference>
<dbReference type="DIP" id="DIP-3812N"/>
<dbReference type="FunCoup" id="Q03083">
    <property type="interactions" value="37"/>
</dbReference>
<dbReference type="IntAct" id="Q03083">
    <property type="interactions" value="1"/>
</dbReference>
<dbReference type="STRING" id="4932.YPL034W"/>
<dbReference type="iPTMnet" id="Q03083"/>
<dbReference type="PaxDb" id="4932-YPL034W"/>
<dbReference type="PeptideAtlas" id="Q03083"/>
<dbReference type="EnsemblFungi" id="YPL034W_mRNA">
    <property type="protein sequence ID" value="YPL034W"/>
    <property type="gene ID" value="YPL034W"/>
</dbReference>
<dbReference type="GeneID" id="856072"/>
<dbReference type="KEGG" id="sce:YPL034W"/>
<dbReference type="AGR" id="SGD:S000005955"/>
<dbReference type="SGD" id="S000005955">
    <property type="gene designation" value="YPL034W"/>
</dbReference>
<dbReference type="VEuPathDB" id="FungiDB:YPL034W"/>
<dbReference type="eggNOG" id="ENOG502S4T1">
    <property type="taxonomic scope" value="Eukaryota"/>
</dbReference>
<dbReference type="HOGENOM" id="CLU_069853_1_0_1"/>
<dbReference type="InParanoid" id="Q03083"/>
<dbReference type="OMA" id="CKHPVIN"/>
<dbReference type="OrthoDB" id="4074785at2759"/>
<dbReference type="BioCyc" id="YEAST:G3O-33949-MONOMER"/>
<dbReference type="BioGRID-ORCS" id="856072">
    <property type="hits" value="1 hit in 10 CRISPR screens"/>
</dbReference>
<dbReference type="PRO" id="PR:Q03083"/>
<dbReference type="Proteomes" id="UP000002311">
    <property type="component" value="Chromosome XVI"/>
</dbReference>
<dbReference type="RNAct" id="Q03083">
    <property type="molecule type" value="protein"/>
</dbReference>
<dbReference type="InterPro" id="IPR053006">
    <property type="entry name" value="Meiosis_regulatory"/>
</dbReference>
<dbReference type="PANTHER" id="PTHR28094">
    <property type="entry name" value="MEIOTICALLY UP-REGULATED GENE 113 PROTEIN"/>
    <property type="match status" value="1"/>
</dbReference>
<dbReference type="PANTHER" id="PTHR28094:SF1">
    <property type="entry name" value="MEIOTICALLY UP-REGULATED GENE 113 PROTEIN"/>
    <property type="match status" value="1"/>
</dbReference>
<reference key="1">
    <citation type="journal article" date="1997" name="Nature">
        <title>The nucleotide sequence of Saccharomyces cerevisiae chromosome XVI.</title>
        <authorList>
            <person name="Bussey H."/>
            <person name="Storms R.K."/>
            <person name="Ahmed A."/>
            <person name="Albermann K."/>
            <person name="Allen E."/>
            <person name="Ansorge W."/>
            <person name="Araujo R."/>
            <person name="Aparicio A."/>
            <person name="Barrell B.G."/>
            <person name="Badcock K."/>
            <person name="Benes V."/>
            <person name="Botstein D."/>
            <person name="Bowman S."/>
            <person name="Brueckner M."/>
            <person name="Carpenter J."/>
            <person name="Cherry J.M."/>
            <person name="Chung E."/>
            <person name="Churcher C.M."/>
            <person name="Coster F."/>
            <person name="Davis K."/>
            <person name="Davis R.W."/>
            <person name="Dietrich F.S."/>
            <person name="Delius H."/>
            <person name="DiPaolo T."/>
            <person name="Dubois E."/>
            <person name="Duesterhoeft A."/>
            <person name="Duncan M."/>
            <person name="Floeth M."/>
            <person name="Fortin N."/>
            <person name="Friesen J.D."/>
            <person name="Fritz C."/>
            <person name="Goffeau A."/>
            <person name="Hall J."/>
            <person name="Hebling U."/>
            <person name="Heumann K."/>
            <person name="Hilbert H."/>
            <person name="Hillier L.W."/>
            <person name="Hunicke-Smith S."/>
            <person name="Hyman R.W."/>
            <person name="Johnston M."/>
            <person name="Kalman S."/>
            <person name="Kleine K."/>
            <person name="Komp C."/>
            <person name="Kurdi O."/>
            <person name="Lashkari D."/>
            <person name="Lew H."/>
            <person name="Lin A."/>
            <person name="Lin D."/>
            <person name="Louis E.J."/>
            <person name="Marathe R."/>
            <person name="Messenguy F."/>
            <person name="Mewes H.-W."/>
            <person name="Mirtipati S."/>
            <person name="Moestl D."/>
            <person name="Mueller-Auer S."/>
            <person name="Namath A."/>
            <person name="Nentwich U."/>
            <person name="Oefner P."/>
            <person name="Pearson D."/>
            <person name="Petel F.X."/>
            <person name="Pohl T.M."/>
            <person name="Purnelle B."/>
            <person name="Rajandream M.A."/>
            <person name="Rechmann S."/>
            <person name="Rieger M."/>
            <person name="Riles L."/>
            <person name="Roberts D."/>
            <person name="Schaefer M."/>
            <person name="Scharfe M."/>
            <person name="Scherens B."/>
            <person name="Schramm S."/>
            <person name="Schroeder M."/>
            <person name="Sdicu A.-M."/>
            <person name="Tettelin H."/>
            <person name="Urrestarazu L.A."/>
            <person name="Ushinsky S."/>
            <person name="Vierendeels F."/>
            <person name="Vissers S."/>
            <person name="Voss H."/>
            <person name="Walsh S.V."/>
            <person name="Wambutt R."/>
            <person name="Wang Y."/>
            <person name="Wedler E."/>
            <person name="Wedler H."/>
            <person name="Winnett E."/>
            <person name="Zhong W.-W."/>
            <person name="Zollner A."/>
            <person name="Vo D.H."/>
            <person name="Hani J."/>
        </authorList>
    </citation>
    <scope>NUCLEOTIDE SEQUENCE [LARGE SCALE GENOMIC DNA]</scope>
    <source>
        <strain>ATCC 204508 / S288c</strain>
    </source>
</reference>
<reference key="2">
    <citation type="journal article" date="2014" name="G3 (Bethesda)">
        <title>The reference genome sequence of Saccharomyces cerevisiae: Then and now.</title>
        <authorList>
            <person name="Engel S.R."/>
            <person name="Dietrich F.S."/>
            <person name="Fisk D.G."/>
            <person name="Binkley G."/>
            <person name="Balakrishnan R."/>
            <person name="Costanzo M.C."/>
            <person name="Dwight S.S."/>
            <person name="Hitz B.C."/>
            <person name="Karra K."/>
            <person name="Nash R.S."/>
            <person name="Weng S."/>
            <person name="Wong E.D."/>
            <person name="Lloyd P."/>
            <person name="Skrzypek M.S."/>
            <person name="Miyasato S.R."/>
            <person name="Simison M."/>
            <person name="Cherry J.M."/>
        </authorList>
    </citation>
    <scope>GENOME REANNOTATION</scope>
    <source>
        <strain>ATCC 204508 / S288c</strain>
    </source>
</reference>
<reference key="3">
    <citation type="journal article" date="2007" name="Genome Res.">
        <title>Approaching a complete repository of sequence-verified protein-encoding clones for Saccharomyces cerevisiae.</title>
        <authorList>
            <person name="Hu Y."/>
            <person name="Rolfs A."/>
            <person name="Bhullar B."/>
            <person name="Murthy T.V.S."/>
            <person name="Zhu C."/>
            <person name="Berger M.F."/>
            <person name="Camargo A.A."/>
            <person name="Kelley F."/>
            <person name="McCarron S."/>
            <person name="Jepson D."/>
            <person name="Richardson A."/>
            <person name="Raphael J."/>
            <person name="Moreira D."/>
            <person name="Taycher E."/>
            <person name="Zuo D."/>
            <person name="Mohr S."/>
            <person name="Kane M.F."/>
            <person name="Williamson J."/>
            <person name="Simpson A.J.G."/>
            <person name="Bulyk M.L."/>
            <person name="Harlow E."/>
            <person name="Marsischky G."/>
            <person name="Kolodner R.D."/>
            <person name="LaBaer J."/>
        </authorList>
    </citation>
    <scope>NUCLEOTIDE SEQUENCE [GENOMIC DNA]</scope>
    <source>
        <strain>ATCC 204508 / S288c</strain>
    </source>
</reference>